<dbReference type="EC" id="7.-.-.-" evidence="1"/>
<dbReference type="EMBL" id="CP000266">
    <property type="protein sequence ID" value="ABF03820.1"/>
    <property type="molecule type" value="Genomic_DNA"/>
</dbReference>
<dbReference type="RefSeq" id="WP_001289662.1">
    <property type="nucleotide sequence ID" value="NC_008258.1"/>
</dbReference>
<dbReference type="SMR" id="Q0T4E5"/>
<dbReference type="KEGG" id="sfv:SFV_1649"/>
<dbReference type="HOGENOM" id="CLU_046659_1_0_6"/>
<dbReference type="Proteomes" id="UP000000659">
    <property type="component" value="Chromosome"/>
</dbReference>
<dbReference type="GO" id="GO:0005886">
    <property type="term" value="C:plasma membrane"/>
    <property type="evidence" value="ECO:0007669"/>
    <property type="project" value="UniProtKB-SubCell"/>
</dbReference>
<dbReference type="GO" id="GO:0022900">
    <property type="term" value="P:electron transport chain"/>
    <property type="evidence" value="ECO:0007669"/>
    <property type="project" value="UniProtKB-UniRule"/>
</dbReference>
<dbReference type="HAMAP" id="MF_00478">
    <property type="entry name" value="RsxE_RnfE"/>
    <property type="match status" value="1"/>
</dbReference>
<dbReference type="InterPro" id="IPR003667">
    <property type="entry name" value="NqrDE/RnfAE"/>
</dbReference>
<dbReference type="InterPro" id="IPR010968">
    <property type="entry name" value="RnfE"/>
</dbReference>
<dbReference type="NCBIfam" id="NF009070">
    <property type="entry name" value="PRK12405.1"/>
    <property type="match status" value="1"/>
</dbReference>
<dbReference type="NCBIfam" id="TIGR01948">
    <property type="entry name" value="rnfE"/>
    <property type="match status" value="1"/>
</dbReference>
<dbReference type="PANTHER" id="PTHR30586">
    <property type="entry name" value="ELECTRON TRANSPORT COMPLEX PROTEIN RNFE"/>
    <property type="match status" value="1"/>
</dbReference>
<dbReference type="PANTHER" id="PTHR30586:SF0">
    <property type="entry name" value="ION-TRANSLOCATING OXIDOREDUCTASE COMPLEX SUBUNIT E"/>
    <property type="match status" value="1"/>
</dbReference>
<dbReference type="Pfam" id="PF02508">
    <property type="entry name" value="Rnf-Nqr"/>
    <property type="match status" value="1"/>
</dbReference>
<dbReference type="PIRSF" id="PIRSF006102">
    <property type="entry name" value="NQR_DE"/>
    <property type="match status" value="1"/>
</dbReference>
<keyword id="KW-0997">Cell inner membrane</keyword>
<keyword id="KW-1003">Cell membrane</keyword>
<keyword id="KW-0249">Electron transport</keyword>
<keyword id="KW-0472">Membrane</keyword>
<keyword id="KW-1278">Translocase</keyword>
<keyword id="KW-0812">Transmembrane</keyword>
<keyword id="KW-1133">Transmembrane helix</keyword>
<keyword id="KW-0813">Transport</keyword>
<accession>Q0T4E5</accession>
<feature type="chain" id="PRO_1000014111" description="Ion-translocating oxidoreductase complex subunit E">
    <location>
        <begin position="1"/>
        <end position="231"/>
    </location>
</feature>
<feature type="transmembrane region" description="Helical" evidence="1">
    <location>
        <begin position="18"/>
        <end position="38"/>
    </location>
</feature>
<feature type="transmembrane region" description="Helical" evidence="1">
    <location>
        <begin position="39"/>
        <end position="59"/>
    </location>
</feature>
<feature type="transmembrane region" description="Helical" evidence="1">
    <location>
        <begin position="63"/>
        <end position="83"/>
    </location>
</feature>
<feature type="transmembrane region" description="Helical" evidence="1">
    <location>
        <begin position="86"/>
        <end position="106"/>
    </location>
</feature>
<feature type="transmembrane region" description="Helical" evidence="1">
    <location>
        <begin position="125"/>
        <end position="145"/>
    </location>
</feature>
<feature type="transmembrane region" description="Helical" evidence="1">
    <location>
        <begin position="182"/>
        <end position="202"/>
    </location>
</feature>
<protein>
    <recommendedName>
        <fullName evidence="1">Ion-translocating oxidoreductase complex subunit E</fullName>
        <ecNumber evidence="1">7.-.-.-</ecNumber>
    </recommendedName>
    <alternativeName>
        <fullName evidence="1">Rsx electron transport complex subunit E</fullName>
    </alternativeName>
</protein>
<name>RSXE_SHIF8</name>
<comment type="function">
    <text evidence="1">Part of a membrane-bound complex that couples electron transfer with translocation of ions across the membrane. Required to maintain the reduced state of SoxR.</text>
</comment>
<comment type="subunit">
    <text evidence="1">The complex is composed of six subunits: RsxA, RsxB, RsxC, RsxD, RsxE and RsxG.</text>
</comment>
<comment type="subcellular location">
    <subcellularLocation>
        <location evidence="1">Cell inner membrane</location>
        <topology evidence="1">Multi-pass membrane protein</topology>
    </subcellularLocation>
</comment>
<comment type="similarity">
    <text evidence="1">Belongs to the NqrDE/RnfAE family.</text>
</comment>
<reference key="1">
    <citation type="journal article" date="2006" name="BMC Genomics">
        <title>Complete genome sequence of Shigella flexneri 5b and comparison with Shigella flexneri 2a.</title>
        <authorList>
            <person name="Nie H."/>
            <person name="Yang F."/>
            <person name="Zhang X."/>
            <person name="Yang J."/>
            <person name="Chen L."/>
            <person name="Wang J."/>
            <person name="Xiong Z."/>
            <person name="Peng J."/>
            <person name="Sun L."/>
            <person name="Dong J."/>
            <person name="Xue Y."/>
            <person name="Xu X."/>
            <person name="Chen S."/>
            <person name="Yao Z."/>
            <person name="Shen Y."/>
            <person name="Jin Q."/>
        </authorList>
    </citation>
    <scope>NUCLEOTIDE SEQUENCE [LARGE SCALE GENOMIC DNA]</scope>
    <source>
        <strain>8401</strain>
    </source>
</reference>
<organism>
    <name type="scientific">Shigella flexneri serotype 5b (strain 8401)</name>
    <dbReference type="NCBI Taxonomy" id="373384"/>
    <lineage>
        <taxon>Bacteria</taxon>
        <taxon>Pseudomonadati</taxon>
        <taxon>Pseudomonadota</taxon>
        <taxon>Gammaproteobacteria</taxon>
        <taxon>Enterobacterales</taxon>
        <taxon>Enterobacteriaceae</taxon>
        <taxon>Shigella</taxon>
    </lineage>
</organism>
<evidence type="ECO:0000255" key="1">
    <source>
        <dbReference type="HAMAP-Rule" id="MF_00478"/>
    </source>
</evidence>
<proteinExistence type="inferred from homology"/>
<sequence length="231" mass="24429">MSEIKDVIVQGLWKNNSALVQLLGLCPLLAVTSTATNALGLGLATTLVLTLTNLTISTLRHWTPAEIRIPIYVMIIASVVSAVQMLINAYAFGLYQSLGIFIPLIVTNCIVVGRAEAFAAKKGPALSALDGFSIGTGATCAMFVLGSLREIIGNGTLFDGADALLGSWAKVLRVEIFHTDSPFLLAMLPPGAFIGLGLMLAGKYLIDERMKKRRAEAAAERALPNGETGNV</sequence>
<gene>
    <name evidence="1" type="primary">rsxE</name>
    <name type="ordered locus">SFV_1649</name>
</gene>